<protein>
    <recommendedName>
        <fullName evidence="1">tRNA-cytidine(32) 2-sulfurtransferase</fullName>
        <ecNumber evidence="1">2.8.1.-</ecNumber>
    </recommendedName>
    <alternativeName>
        <fullName evidence="1">Two-thiocytidine biosynthesis protein A</fullName>
    </alternativeName>
    <alternativeName>
        <fullName evidence="1">tRNA 2-thiocytidine biosynthesis protein TtcA</fullName>
    </alternativeName>
</protein>
<dbReference type="EC" id="2.8.1.-" evidence="1"/>
<dbReference type="EMBL" id="CP001157">
    <property type="protein sequence ID" value="ACO79477.1"/>
    <property type="molecule type" value="Genomic_DNA"/>
</dbReference>
<dbReference type="RefSeq" id="WP_012701861.1">
    <property type="nucleotide sequence ID" value="NC_012560.1"/>
</dbReference>
<dbReference type="SMR" id="C1DPQ6"/>
<dbReference type="STRING" id="322710.Avin_33230"/>
<dbReference type="EnsemblBacteria" id="ACO79477">
    <property type="protein sequence ID" value="ACO79477"/>
    <property type="gene ID" value="Avin_33230"/>
</dbReference>
<dbReference type="GeneID" id="88186362"/>
<dbReference type="KEGG" id="avn:Avin_33230"/>
<dbReference type="eggNOG" id="COG0037">
    <property type="taxonomic scope" value="Bacteria"/>
</dbReference>
<dbReference type="HOGENOM" id="CLU_026481_0_0_6"/>
<dbReference type="OrthoDB" id="9801054at2"/>
<dbReference type="Proteomes" id="UP000002424">
    <property type="component" value="Chromosome"/>
</dbReference>
<dbReference type="GO" id="GO:0005737">
    <property type="term" value="C:cytoplasm"/>
    <property type="evidence" value="ECO:0007669"/>
    <property type="project" value="UniProtKB-SubCell"/>
</dbReference>
<dbReference type="GO" id="GO:0051539">
    <property type="term" value="F:4 iron, 4 sulfur cluster binding"/>
    <property type="evidence" value="ECO:0007669"/>
    <property type="project" value="UniProtKB-UniRule"/>
</dbReference>
<dbReference type="GO" id="GO:0005524">
    <property type="term" value="F:ATP binding"/>
    <property type="evidence" value="ECO:0007669"/>
    <property type="project" value="UniProtKB-UniRule"/>
</dbReference>
<dbReference type="GO" id="GO:0000287">
    <property type="term" value="F:magnesium ion binding"/>
    <property type="evidence" value="ECO:0007669"/>
    <property type="project" value="UniProtKB-UniRule"/>
</dbReference>
<dbReference type="GO" id="GO:0016783">
    <property type="term" value="F:sulfurtransferase activity"/>
    <property type="evidence" value="ECO:0007669"/>
    <property type="project" value="UniProtKB-UniRule"/>
</dbReference>
<dbReference type="GO" id="GO:0000049">
    <property type="term" value="F:tRNA binding"/>
    <property type="evidence" value="ECO:0007669"/>
    <property type="project" value="UniProtKB-KW"/>
</dbReference>
<dbReference type="GO" id="GO:0034227">
    <property type="term" value="P:tRNA thio-modification"/>
    <property type="evidence" value="ECO:0007669"/>
    <property type="project" value="UniProtKB-UniRule"/>
</dbReference>
<dbReference type="CDD" id="cd24138">
    <property type="entry name" value="TtcA-like"/>
    <property type="match status" value="1"/>
</dbReference>
<dbReference type="Gene3D" id="3.40.50.620">
    <property type="entry name" value="HUPs"/>
    <property type="match status" value="1"/>
</dbReference>
<dbReference type="HAMAP" id="MF_01850">
    <property type="entry name" value="TtcA"/>
    <property type="match status" value="1"/>
</dbReference>
<dbReference type="InterPro" id="IPR014729">
    <property type="entry name" value="Rossmann-like_a/b/a_fold"/>
</dbReference>
<dbReference type="InterPro" id="IPR011063">
    <property type="entry name" value="TilS/TtcA_N"/>
</dbReference>
<dbReference type="InterPro" id="IPR012089">
    <property type="entry name" value="tRNA_Cyd_32_2_STrfase"/>
</dbReference>
<dbReference type="InterPro" id="IPR035107">
    <property type="entry name" value="tRNA_thiolation_TtcA_Ctu1"/>
</dbReference>
<dbReference type="NCBIfam" id="NF007972">
    <property type="entry name" value="PRK10696.1"/>
    <property type="match status" value="1"/>
</dbReference>
<dbReference type="PANTHER" id="PTHR43686:SF1">
    <property type="entry name" value="AMINOTRAN_5 DOMAIN-CONTAINING PROTEIN"/>
    <property type="match status" value="1"/>
</dbReference>
<dbReference type="PANTHER" id="PTHR43686">
    <property type="entry name" value="SULFURTRANSFERASE-RELATED"/>
    <property type="match status" value="1"/>
</dbReference>
<dbReference type="Pfam" id="PF01171">
    <property type="entry name" value="ATP_bind_3"/>
    <property type="match status" value="1"/>
</dbReference>
<dbReference type="PIRSF" id="PIRSF004976">
    <property type="entry name" value="ATPase_YdaO"/>
    <property type="match status" value="1"/>
</dbReference>
<dbReference type="SUPFAM" id="SSF52402">
    <property type="entry name" value="Adenine nucleotide alpha hydrolases-like"/>
    <property type="match status" value="1"/>
</dbReference>
<organism>
    <name type="scientific">Azotobacter vinelandii (strain DJ / ATCC BAA-1303)</name>
    <dbReference type="NCBI Taxonomy" id="322710"/>
    <lineage>
        <taxon>Bacteria</taxon>
        <taxon>Pseudomonadati</taxon>
        <taxon>Pseudomonadota</taxon>
        <taxon>Gammaproteobacteria</taxon>
        <taxon>Pseudomonadales</taxon>
        <taxon>Pseudomonadaceae</taxon>
        <taxon>Azotobacter</taxon>
    </lineage>
</organism>
<name>TTCA_AZOVD</name>
<evidence type="ECO:0000255" key="1">
    <source>
        <dbReference type="HAMAP-Rule" id="MF_01850"/>
    </source>
</evidence>
<keyword id="KW-0004">4Fe-4S</keyword>
<keyword id="KW-0067">ATP-binding</keyword>
<keyword id="KW-0963">Cytoplasm</keyword>
<keyword id="KW-0408">Iron</keyword>
<keyword id="KW-0411">Iron-sulfur</keyword>
<keyword id="KW-0460">Magnesium</keyword>
<keyword id="KW-0479">Metal-binding</keyword>
<keyword id="KW-0547">Nucleotide-binding</keyword>
<keyword id="KW-0694">RNA-binding</keyword>
<keyword id="KW-0808">Transferase</keyword>
<keyword id="KW-0819">tRNA processing</keyword>
<keyword id="KW-0820">tRNA-binding</keyword>
<sequence length="274" mass="30986">MGTLSVNQNKLQKRLRRLAGEAVTDFNMIEEGDKVMVCLSGGKDSYTMLDVLLYLQKVAPIGFEIVAVNMDQKQPGFPEEVLPTYLKSIGVDYHIIEKDTYSVVKEKIPEGKTTCSLCSRLRRGTLYTFADRIGATKMALGHHRDDILETFFLNLFYGGTLKAMPPKLLSDDGRNVVIRPLAYCSETDIEAYAKLKEFPIIPCNLCGSQENLQRQVVKEMLREWERQSPGRTEIMFRALQNVHPSQLADRKLFDFAGLRIDDSAAPRFVDAVNL</sequence>
<accession>C1DPQ6</accession>
<reference key="1">
    <citation type="journal article" date="2009" name="J. Bacteriol.">
        <title>Genome sequence of Azotobacter vinelandii, an obligate aerobe specialized to support diverse anaerobic metabolic processes.</title>
        <authorList>
            <person name="Setubal J.C."/>
            <person name="Dos Santos P."/>
            <person name="Goldman B.S."/>
            <person name="Ertesvaag H."/>
            <person name="Espin G."/>
            <person name="Rubio L.M."/>
            <person name="Valla S."/>
            <person name="Almeida N.F."/>
            <person name="Balasubramanian D."/>
            <person name="Cromes L."/>
            <person name="Curatti L."/>
            <person name="Du Z."/>
            <person name="Godsy E."/>
            <person name="Goodner B."/>
            <person name="Hellner-Burris K."/>
            <person name="Hernandez J.A."/>
            <person name="Houmiel K."/>
            <person name="Imperial J."/>
            <person name="Kennedy C."/>
            <person name="Larson T.J."/>
            <person name="Latreille P."/>
            <person name="Ligon L.S."/>
            <person name="Lu J."/>
            <person name="Maerk M."/>
            <person name="Miller N.M."/>
            <person name="Norton S."/>
            <person name="O'Carroll I.P."/>
            <person name="Paulsen I."/>
            <person name="Raulfs E.C."/>
            <person name="Roemer R."/>
            <person name="Rosser J."/>
            <person name="Segura D."/>
            <person name="Slater S."/>
            <person name="Stricklin S.L."/>
            <person name="Studholme D.J."/>
            <person name="Sun J."/>
            <person name="Viana C.J."/>
            <person name="Wallin E."/>
            <person name="Wang B."/>
            <person name="Wheeler C."/>
            <person name="Zhu H."/>
            <person name="Dean D.R."/>
            <person name="Dixon R."/>
            <person name="Wood D."/>
        </authorList>
    </citation>
    <scope>NUCLEOTIDE SEQUENCE [LARGE SCALE GENOMIC DNA]</scope>
    <source>
        <strain>DJ / ATCC BAA-1303</strain>
    </source>
</reference>
<feature type="chain" id="PRO_1000216129" description="tRNA-cytidine(32) 2-sulfurtransferase">
    <location>
        <begin position="1"/>
        <end position="274"/>
    </location>
</feature>
<feature type="short sequence motif" description="PP-loop motif" evidence="1">
    <location>
        <begin position="40"/>
        <end position="45"/>
    </location>
</feature>
<feature type="binding site" evidence="1">
    <location>
        <position position="115"/>
    </location>
    <ligand>
        <name>[4Fe-4S] cluster</name>
        <dbReference type="ChEBI" id="CHEBI:49883"/>
    </ligand>
</feature>
<feature type="binding site" evidence="1">
    <location>
        <position position="118"/>
    </location>
    <ligand>
        <name>[4Fe-4S] cluster</name>
        <dbReference type="ChEBI" id="CHEBI:49883"/>
    </ligand>
</feature>
<feature type="binding site" evidence="1">
    <location>
        <position position="206"/>
    </location>
    <ligand>
        <name>[4Fe-4S] cluster</name>
        <dbReference type="ChEBI" id="CHEBI:49883"/>
    </ligand>
</feature>
<gene>
    <name evidence="1" type="primary">ttcA</name>
    <name type="ordered locus">Avin_33230</name>
</gene>
<comment type="function">
    <text evidence="1">Catalyzes the ATP-dependent 2-thiolation of cytidine in position 32 of tRNA, to form 2-thiocytidine (s(2)C32). The sulfur atoms are provided by the cysteine/cysteine desulfurase (IscS) system.</text>
</comment>
<comment type="catalytic activity">
    <reaction evidence="1">
        <text>cytidine(32) in tRNA + S-sulfanyl-L-cysteinyl-[cysteine desulfurase] + AH2 + ATP = 2-thiocytidine(32) in tRNA + L-cysteinyl-[cysteine desulfurase] + A + AMP + diphosphate + H(+)</text>
        <dbReference type="Rhea" id="RHEA:57048"/>
        <dbReference type="Rhea" id="RHEA-COMP:10288"/>
        <dbReference type="Rhea" id="RHEA-COMP:12157"/>
        <dbReference type="Rhea" id="RHEA-COMP:12158"/>
        <dbReference type="Rhea" id="RHEA-COMP:14821"/>
        <dbReference type="ChEBI" id="CHEBI:13193"/>
        <dbReference type="ChEBI" id="CHEBI:15378"/>
        <dbReference type="ChEBI" id="CHEBI:17499"/>
        <dbReference type="ChEBI" id="CHEBI:29950"/>
        <dbReference type="ChEBI" id="CHEBI:30616"/>
        <dbReference type="ChEBI" id="CHEBI:33019"/>
        <dbReference type="ChEBI" id="CHEBI:61963"/>
        <dbReference type="ChEBI" id="CHEBI:82748"/>
        <dbReference type="ChEBI" id="CHEBI:141453"/>
        <dbReference type="ChEBI" id="CHEBI:456215"/>
    </reaction>
    <physiologicalReaction direction="left-to-right" evidence="1">
        <dbReference type="Rhea" id="RHEA:57049"/>
    </physiologicalReaction>
</comment>
<comment type="cofactor">
    <cofactor evidence="1">
        <name>Mg(2+)</name>
        <dbReference type="ChEBI" id="CHEBI:18420"/>
    </cofactor>
</comment>
<comment type="cofactor">
    <cofactor evidence="1">
        <name>[4Fe-4S] cluster</name>
        <dbReference type="ChEBI" id="CHEBI:49883"/>
    </cofactor>
    <text evidence="1">Binds 1 [4Fe-4S] cluster per subunit. The cluster is chelated by three Cys residues, the fourth Fe has a free coordination site that may bind a sulfur atom transferred from the persulfide of IscS.</text>
</comment>
<comment type="pathway">
    <text evidence="1">tRNA modification.</text>
</comment>
<comment type="subunit">
    <text evidence="1">Homodimer.</text>
</comment>
<comment type="subcellular location">
    <subcellularLocation>
        <location evidence="1">Cytoplasm</location>
    </subcellularLocation>
</comment>
<comment type="miscellaneous">
    <text evidence="1">The thiolation reaction likely consists of two steps: a first activation step by ATP to form an adenylated intermediate of the target base of tRNA, and a second nucleophilic substitution step of the sulfur (S) atom supplied by the hydrosulfide attached to the Fe-S cluster.</text>
</comment>
<comment type="similarity">
    <text evidence="1">Belongs to the TtcA family.</text>
</comment>
<proteinExistence type="inferred from homology"/>